<feature type="chain" id="PRO_1000214560" description="Large ribosomal subunit protein uL24">
    <location>
        <begin position="1"/>
        <end position="105"/>
    </location>
</feature>
<keyword id="KW-1185">Reference proteome</keyword>
<keyword id="KW-0687">Ribonucleoprotein</keyword>
<keyword id="KW-0689">Ribosomal protein</keyword>
<keyword id="KW-0694">RNA-binding</keyword>
<keyword id="KW-0699">rRNA-binding</keyword>
<organism>
    <name type="scientific">Tolumonas auensis (strain DSM 9187 / NBRC 110442 / TA 4)</name>
    <dbReference type="NCBI Taxonomy" id="595494"/>
    <lineage>
        <taxon>Bacteria</taxon>
        <taxon>Pseudomonadati</taxon>
        <taxon>Pseudomonadota</taxon>
        <taxon>Gammaproteobacteria</taxon>
        <taxon>Aeromonadales</taxon>
        <taxon>Aeromonadaceae</taxon>
        <taxon>Tolumonas</taxon>
    </lineage>
</organism>
<evidence type="ECO:0000255" key="1">
    <source>
        <dbReference type="HAMAP-Rule" id="MF_01326"/>
    </source>
</evidence>
<evidence type="ECO:0000305" key="2"/>
<dbReference type="EMBL" id="CP001616">
    <property type="protein sequence ID" value="ACQ91740.1"/>
    <property type="molecule type" value="Genomic_DNA"/>
</dbReference>
<dbReference type="RefSeq" id="WP_012728339.1">
    <property type="nucleotide sequence ID" value="NC_012691.1"/>
</dbReference>
<dbReference type="SMR" id="C4L7U1"/>
<dbReference type="STRING" id="595494.Tola_0110"/>
<dbReference type="KEGG" id="tau:Tola_0110"/>
<dbReference type="eggNOG" id="COG0198">
    <property type="taxonomic scope" value="Bacteria"/>
</dbReference>
<dbReference type="HOGENOM" id="CLU_093315_2_2_6"/>
<dbReference type="OrthoDB" id="9807419at2"/>
<dbReference type="Proteomes" id="UP000009073">
    <property type="component" value="Chromosome"/>
</dbReference>
<dbReference type="GO" id="GO:1990904">
    <property type="term" value="C:ribonucleoprotein complex"/>
    <property type="evidence" value="ECO:0007669"/>
    <property type="project" value="UniProtKB-KW"/>
</dbReference>
<dbReference type="GO" id="GO:0005840">
    <property type="term" value="C:ribosome"/>
    <property type="evidence" value="ECO:0007669"/>
    <property type="project" value="UniProtKB-KW"/>
</dbReference>
<dbReference type="GO" id="GO:0019843">
    <property type="term" value="F:rRNA binding"/>
    <property type="evidence" value="ECO:0007669"/>
    <property type="project" value="UniProtKB-UniRule"/>
</dbReference>
<dbReference type="GO" id="GO:0003735">
    <property type="term" value="F:structural constituent of ribosome"/>
    <property type="evidence" value="ECO:0007669"/>
    <property type="project" value="InterPro"/>
</dbReference>
<dbReference type="GO" id="GO:0006412">
    <property type="term" value="P:translation"/>
    <property type="evidence" value="ECO:0007669"/>
    <property type="project" value="UniProtKB-UniRule"/>
</dbReference>
<dbReference type="CDD" id="cd06089">
    <property type="entry name" value="KOW_RPL26"/>
    <property type="match status" value="1"/>
</dbReference>
<dbReference type="FunFam" id="2.30.30.30:FF:000004">
    <property type="entry name" value="50S ribosomal protein L24"/>
    <property type="match status" value="1"/>
</dbReference>
<dbReference type="Gene3D" id="2.30.30.30">
    <property type="match status" value="1"/>
</dbReference>
<dbReference type="HAMAP" id="MF_01326_B">
    <property type="entry name" value="Ribosomal_uL24_B"/>
    <property type="match status" value="1"/>
</dbReference>
<dbReference type="InterPro" id="IPR005824">
    <property type="entry name" value="KOW"/>
</dbReference>
<dbReference type="InterPro" id="IPR014722">
    <property type="entry name" value="Rib_uL2_dom2"/>
</dbReference>
<dbReference type="InterPro" id="IPR003256">
    <property type="entry name" value="Ribosomal_uL24"/>
</dbReference>
<dbReference type="InterPro" id="IPR005825">
    <property type="entry name" value="Ribosomal_uL24_CS"/>
</dbReference>
<dbReference type="InterPro" id="IPR041988">
    <property type="entry name" value="Ribosomal_uL24_KOW"/>
</dbReference>
<dbReference type="InterPro" id="IPR008991">
    <property type="entry name" value="Translation_prot_SH3-like_sf"/>
</dbReference>
<dbReference type="NCBIfam" id="TIGR01079">
    <property type="entry name" value="rplX_bact"/>
    <property type="match status" value="1"/>
</dbReference>
<dbReference type="PANTHER" id="PTHR12903">
    <property type="entry name" value="MITOCHONDRIAL RIBOSOMAL PROTEIN L24"/>
    <property type="match status" value="1"/>
</dbReference>
<dbReference type="Pfam" id="PF00467">
    <property type="entry name" value="KOW"/>
    <property type="match status" value="1"/>
</dbReference>
<dbReference type="Pfam" id="PF17136">
    <property type="entry name" value="ribosomal_L24"/>
    <property type="match status" value="1"/>
</dbReference>
<dbReference type="SUPFAM" id="SSF50104">
    <property type="entry name" value="Translation proteins SH3-like domain"/>
    <property type="match status" value="1"/>
</dbReference>
<dbReference type="PROSITE" id="PS01108">
    <property type="entry name" value="RIBOSOMAL_L24"/>
    <property type="match status" value="1"/>
</dbReference>
<accession>C4L7U1</accession>
<proteinExistence type="inferred from homology"/>
<comment type="function">
    <text evidence="1">One of two assembly initiator proteins, it binds directly to the 5'-end of the 23S rRNA, where it nucleates assembly of the 50S subunit.</text>
</comment>
<comment type="function">
    <text evidence="1">One of the proteins that surrounds the polypeptide exit tunnel on the outside of the subunit.</text>
</comment>
<comment type="subunit">
    <text evidence="1">Part of the 50S ribosomal subunit.</text>
</comment>
<comment type="similarity">
    <text evidence="1">Belongs to the universal ribosomal protein uL24 family.</text>
</comment>
<gene>
    <name evidence="1" type="primary">rplX</name>
    <name type="ordered locus">Tola_0110</name>
</gene>
<sequence>MAAKIRREDEVIVLTGKDKGKRGKVTKVLVEQGKVIVEGINVKKKHQKPVPALGVAGGIVSKEAAVDVSNVALFNPATGKGDRVGFRFEDGNKVRFFKSNGELVK</sequence>
<protein>
    <recommendedName>
        <fullName evidence="1">Large ribosomal subunit protein uL24</fullName>
    </recommendedName>
    <alternativeName>
        <fullName evidence="2">50S ribosomal protein L24</fullName>
    </alternativeName>
</protein>
<reference key="1">
    <citation type="submission" date="2009-05" db="EMBL/GenBank/DDBJ databases">
        <title>Complete sequence of Tolumonas auensis DSM 9187.</title>
        <authorList>
            <consortium name="US DOE Joint Genome Institute"/>
            <person name="Lucas S."/>
            <person name="Copeland A."/>
            <person name="Lapidus A."/>
            <person name="Glavina del Rio T."/>
            <person name="Tice H."/>
            <person name="Bruce D."/>
            <person name="Goodwin L."/>
            <person name="Pitluck S."/>
            <person name="Chertkov O."/>
            <person name="Brettin T."/>
            <person name="Detter J.C."/>
            <person name="Han C."/>
            <person name="Larimer F."/>
            <person name="Land M."/>
            <person name="Hauser L."/>
            <person name="Kyrpides N."/>
            <person name="Mikhailova N."/>
            <person name="Spring S."/>
            <person name="Beller H."/>
        </authorList>
    </citation>
    <scope>NUCLEOTIDE SEQUENCE [LARGE SCALE GENOMIC DNA]</scope>
    <source>
        <strain>DSM 9187 / NBRC 110442 / TA 4</strain>
    </source>
</reference>
<name>RL24_TOLAT</name>